<protein>
    <recommendedName>
        <fullName evidence="1">Asparagine--tRNA ligase</fullName>
        <ecNumber evidence="1">6.1.1.22</ecNumber>
    </recommendedName>
    <alternativeName>
        <fullName evidence="1">Asparaginyl-tRNA synthetase</fullName>
        <shortName evidence="1">AsnRS</shortName>
    </alternativeName>
</protein>
<dbReference type="EC" id="6.1.1.22" evidence="1"/>
<dbReference type="EMBL" id="CP000413">
    <property type="protein sequence ID" value="ABJ60403.1"/>
    <property type="molecule type" value="Genomic_DNA"/>
</dbReference>
<dbReference type="RefSeq" id="WP_003647276.1">
    <property type="nucleotide sequence ID" value="NZ_WBMG01000008.1"/>
</dbReference>
<dbReference type="SMR" id="Q043G9"/>
<dbReference type="GeneID" id="29638356"/>
<dbReference type="KEGG" id="lga:LGAS_1028"/>
<dbReference type="HOGENOM" id="CLU_004553_2_0_9"/>
<dbReference type="BioCyc" id="LGAS324831:G1G6Y-1028-MONOMER"/>
<dbReference type="Proteomes" id="UP000000664">
    <property type="component" value="Chromosome"/>
</dbReference>
<dbReference type="GO" id="GO:0005737">
    <property type="term" value="C:cytoplasm"/>
    <property type="evidence" value="ECO:0007669"/>
    <property type="project" value="UniProtKB-SubCell"/>
</dbReference>
<dbReference type="GO" id="GO:0004816">
    <property type="term" value="F:asparagine-tRNA ligase activity"/>
    <property type="evidence" value="ECO:0007669"/>
    <property type="project" value="UniProtKB-UniRule"/>
</dbReference>
<dbReference type="GO" id="GO:0005524">
    <property type="term" value="F:ATP binding"/>
    <property type="evidence" value="ECO:0007669"/>
    <property type="project" value="UniProtKB-UniRule"/>
</dbReference>
<dbReference type="GO" id="GO:0140096">
    <property type="term" value="F:catalytic activity, acting on a protein"/>
    <property type="evidence" value="ECO:0007669"/>
    <property type="project" value="UniProtKB-ARBA"/>
</dbReference>
<dbReference type="GO" id="GO:0003676">
    <property type="term" value="F:nucleic acid binding"/>
    <property type="evidence" value="ECO:0007669"/>
    <property type="project" value="InterPro"/>
</dbReference>
<dbReference type="GO" id="GO:0016740">
    <property type="term" value="F:transferase activity"/>
    <property type="evidence" value="ECO:0007669"/>
    <property type="project" value="UniProtKB-ARBA"/>
</dbReference>
<dbReference type="GO" id="GO:0006421">
    <property type="term" value="P:asparaginyl-tRNA aminoacylation"/>
    <property type="evidence" value="ECO:0007669"/>
    <property type="project" value="UniProtKB-UniRule"/>
</dbReference>
<dbReference type="CDD" id="cd04323">
    <property type="entry name" value="AsnRS_cyto_like_N"/>
    <property type="match status" value="1"/>
</dbReference>
<dbReference type="CDD" id="cd00776">
    <property type="entry name" value="AsxRS_core"/>
    <property type="match status" value="1"/>
</dbReference>
<dbReference type="Gene3D" id="3.30.930.10">
    <property type="entry name" value="Bira Bifunctional Protein, Domain 2"/>
    <property type="match status" value="1"/>
</dbReference>
<dbReference type="Gene3D" id="2.40.50.140">
    <property type="entry name" value="Nucleic acid-binding proteins"/>
    <property type="match status" value="1"/>
</dbReference>
<dbReference type="HAMAP" id="MF_00534">
    <property type="entry name" value="Asn_tRNA_synth"/>
    <property type="match status" value="1"/>
</dbReference>
<dbReference type="InterPro" id="IPR004364">
    <property type="entry name" value="Aa-tRNA-synt_II"/>
</dbReference>
<dbReference type="InterPro" id="IPR006195">
    <property type="entry name" value="aa-tRNA-synth_II"/>
</dbReference>
<dbReference type="InterPro" id="IPR045864">
    <property type="entry name" value="aa-tRNA-synth_II/BPL/LPL"/>
</dbReference>
<dbReference type="InterPro" id="IPR004522">
    <property type="entry name" value="Asn-tRNA-ligase"/>
</dbReference>
<dbReference type="InterPro" id="IPR002312">
    <property type="entry name" value="Asp/Asn-tRNA-synth_IIb"/>
</dbReference>
<dbReference type="InterPro" id="IPR012340">
    <property type="entry name" value="NA-bd_OB-fold"/>
</dbReference>
<dbReference type="InterPro" id="IPR004365">
    <property type="entry name" value="NA-bd_OB_tRNA"/>
</dbReference>
<dbReference type="NCBIfam" id="TIGR00457">
    <property type="entry name" value="asnS"/>
    <property type="match status" value="1"/>
</dbReference>
<dbReference type="NCBIfam" id="NF003037">
    <property type="entry name" value="PRK03932.1"/>
    <property type="match status" value="1"/>
</dbReference>
<dbReference type="PANTHER" id="PTHR22594:SF34">
    <property type="entry name" value="ASPARAGINE--TRNA LIGASE, MITOCHONDRIAL-RELATED"/>
    <property type="match status" value="1"/>
</dbReference>
<dbReference type="PANTHER" id="PTHR22594">
    <property type="entry name" value="ASPARTYL/LYSYL-TRNA SYNTHETASE"/>
    <property type="match status" value="1"/>
</dbReference>
<dbReference type="Pfam" id="PF00152">
    <property type="entry name" value="tRNA-synt_2"/>
    <property type="match status" value="1"/>
</dbReference>
<dbReference type="Pfam" id="PF01336">
    <property type="entry name" value="tRNA_anti-codon"/>
    <property type="match status" value="1"/>
</dbReference>
<dbReference type="PRINTS" id="PR01042">
    <property type="entry name" value="TRNASYNTHASP"/>
</dbReference>
<dbReference type="SUPFAM" id="SSF55681">
    <property type="entry name" value="Class II aaRS and biotin synthetases"/>
    <property type="match status" value="1"/>
</dbReference>
<dbReference type="SUPFAM" id="SSF50249">
    <property type="entry name" value="Nucleic acid-binding proteins"/>
    <property type="match status" value="1"/>
</dbReference>
<dbReference type="PROSITE" id="PS50862">
    <property type="entry name" value="AA_TRNA_LIGASE_II"/>
    <property type="match status" value="1"/>
</dbReference>
<keyword id="KW-0030">Aminoacyl-tRNA synthetase</keyword>
<keyword id="KW-0067">ATP-binding</keyword>
<keyword id="KW-0963">Cytoplasm</keyword>
<keyword id="KW-0436">Ligase</keyword>
<keyword id="KW-0547">Nucleotide-binding</keyword>
<keyword id="KW-0648">Protein biosynthesis</keyword>
<gene>
    <name evidence="1" type="primary">asnS</name>
    <name type="ordered locus">LGAS_1028</name>
</gene>
<proteinExistence type="inferred from homology"/>
<accession>Q043G9</accession>
<reference key="1">
    <citation type="journal article" date="2006" name="Proc. Natl. Acad. Sci. U.S.A.">
        <title>Comparative genomics of the lactic acid bacteria.</title>
        <authorList>
            <person name="Makarova K.S."/>
            <person name="Slesarev A."/>
            <person name="Wolf Y.I."/>
            <person name="Sorokin A."/>
            <person name="Mirkin B."/>
            <person name="Koonin E.V."/>
            <person name="Pavlov A."/>
            <person name="Pavlova N."/>
            <person name="Karamychev V."/>
            <person name="Polouchine N."/>
            <person name="Shakhova V."/>
            <person name="Grigoriev I."/>
            <person name="Lou Y."/>
            <person name="Rohksar D."/>
            <person name="Lucas S."/>
            <person name="Huang K."/>
            <person name="Goodstein D.M."/>
            <person name="Hawkins T."/>
            <person name="Plengvidhya V."/>
            <person name="Welker D."/>
            <person name="Hughes J."/>
            <person name="Goh Y."/>
            <person name="Benson A."/>
            <person name="Baldwin K."/>
            <person name="Lee J.-H."/>
            <person name="Diaz-Muniz I."/>
            <person name="Dosti B."/>
            <person name="Smeianov V."/>
            <person name="Wechter W."/>
            <person name="Barabote R."/>
            <person name="Lorca G."/>
            <person name="Altermann E."/>
            <person name="Barrangou R."/>
            <person name="Ganesan B."/>
            <person name="Xie Y."/>
            <person name="Rawsthorne H."/>
            <person name="Tamir D."/>
            <person name="Parker C."/>
            <person name="Breidt F."/>
            <person name="Broadbent J.R."/>
            <person name="Hutkins R."/>
            <person name="O'Sullivan D."/>
            <person name="Steele J."/>
            <person name="Unlu G."/>
            <person name="Saier M.H. Jr."/>
            <person name="Klaenhammer T."/>
            <person name="Richardson P."/>
            <person name="Kozyavkin S."/>
            <person name="Weimer B.C."/>
            <person name="Mills D.A."/>
        </authorList>
    </citation>
    <scope>NUCLEOTIDE SEQUENCE [LARGE SCALE GENOMIC DNA]</scope>
    <source>
        <strain>ATCC 33323 / DSM 20243 / BCRC 14619 / CIP 102991 / JCM 1131 / KCTC 3163 / NCIMB 11718 / NCTC 13722 / AM63</strain>
    </source>
</reference>
<evidence type="ECO:0000255" key="1">
    <source>
        <dbReference type="HAMAP-Rule" id="MF_00534"/>
    </source>
</evidence>
<name>SYN_LACGA</name>
<comment type="catalytic activity">
    <reaction evidence="1">
        <text>tRNA(Asn) + L-asparagine + ATP = L-asparaginyl-tRNA(Asn) + AMP + diphosphate + H(+)</text>
        <dbReference type="Rhea" id="RHEA:11180"/>
        <dbReference type="Rhea" id="RHEA-COMP:9659"/>
        <dbReference type="Rhea" id="RHEA-COMP:9674"/>
        <dbReference type="ChEBI" id="CHEBI:15378"/>
        <dbReference type="ChEBI" id="CHEBI:30616"/>
        <dbReference type="ChEBI" id="CHEBI:33019"/>
        <dbReference type="ChEBI" id="CHEBI:58048"/>
        <dbReference type="ChEBI" id="CHEBI:78442"/>
        <dbReference type="ChEBI" id="CHEBI:78515"/>
        <dbReference type="ChEBI" id="CHEBI:456215"/>
        <dbReference type="EC" id="6.1.1.22"/>
    </reaction>
</comment>
<comment type="subunit">
    <text evidence="1">Homodimer.</text>
</comment>
<comment type="subcellular location">
    <subcellularLocation>
        <location evidence="1">Cytoplasm</location>
    </subcellularLocation>
</comment>
<comment type="similarity">
    <text evidence="1">Belongs to the class-II aminoacyl-tRNA synthetase family.</text>
</comment>
<organism>
    <name type="scientific">Lactobacillus gasseri (strain ATCC 33323 / DSM 20243 / BCRC 14619 / CIP 102991 / JCM 1131 / KCTC 3163 / NCIMB 11718 / NCTC 13722 / AM63)</name>
    <dbReference type="NCBI Taxonomy" id="324831"/>
    <lineage>
        <taxon>Bacteria</taxon>
        <taxon>Bacillati</taxon>
        <taxon>Bacillota</taxon>
        <taxon>Bacilli</taxon>
        <taxon>Lactobacillales</taxon>
        <taxon>Lactobacillaceae</taxon>
        <taxon>Lactobacillus</taxon>
    </lineage>
</organism>
<feature type="chain" id="PRO_1000051403" description="Asparagine--tRNA ligase">
    <location>
        <begin position="1"/>
        <end position="432"/>
    </location>
</feature>
<sequence length="432" mass="50283">MTELISIKDSSKHVDQKVKMHVWLTDKRSSGKIIFLQLRDGTAFFQGVVRKNDVSEEVFEAAKSLRQEASFYITGTVHEDKRSHFGYEIQISDLEIVSNNEGYPIGNKEHGVDFLLDNRHLWLRSKRPFAIMQIRNTMFKATVDFFEKEGFIKFDAPIFMHSAPEGTTQLFHVEYFNNDAYLSQSGQLYGEAGAMAYGKIFTFGPTFRAEESKGRRHMTEFWMMEPEMAWMHQDESLDIQERYLAYMVKQVLENNEYELRILGRDPEKLRPTTEGNFTRLPYDDAIKMLQEAGRDIKWGDDFGAPDEGYISEQFDRPVFIVNYPTTIKPFYMKKNPDNPKEYLCADVIAPEGYGEIFGGSEREGNYEILKKQIEEAGLNLEDYQWYLDLRKFGGVPHSGFGMGFERTIAWICKLDHIREAIPFPRLINRMQP</sequence>